<gene>
    <name type="primary">ID2</name>
</gene>
<proteinExistence type="evidence at transcript level"/>
<sequence length="134" mass="14860">MKAFSPVRSVRKNSLSDHGLGISRSKTPVDDPMSLLYNMNDCYSKLKELVPSIPQNKKVSKMEILQHVIDYILDLQIALDSHPTIVSLHHQRPGQSQASRTPLTTLNTDISILSLQASEFPSELMSNDSKALCG</sequence>
<organism>
    <name type="scientific">Bos taurus</name>
    <name type="common">Bovine</name>
    <dbReference type="NCBI Taxonomy" id="9913"/>
    <lineage>
        <taxon>Eukaryota</taxon>
        <taxon>Metazoa</taxon>
        <taxon>Chordata</taxon>
        <taxon>Craniata</taxon>
        <taxon>Vertebrata</taxon>
        <taxon>Euteleostomi</taxon>
        <taxon>Mammalia</taxon>
        <taxon>Eutheria</taxon>
        <taxon>Laurasiatheria</taxon>
        <taxon>Artiodactyla</taxon>
        <taxon>Ruminantia</taxon>
        <taxon>Pecora</taxon>
        <taxon>Bovidae</taxon>
        <taxon>Bovinae</taxon>
        <taxon>Bos</taxon>
    </lineage>
</organism>
<keyword id="KW-0090">Biological rhythms</keyword>
<keyword id="KW-0963">Cytoplasm</keyword>
<keyword id="KW-0217">Developmental protein</keyword>
<keyword id="KW-0539">Nucleus</keyword>
<keyword id="KW-0597">Phosphoprotein</keyword>
<keyword id="KW-1185">Reference proteome</keyword>
<keyword id="KW-0678">Repressor</keyword>
<keyword id="KW-0804">Transcription</keyword>
<keyword id="KW-0805">Transcription regulation</keyword>
<keyword id="KW-0832">Ubl conjugation</keyword>
<protein>
    <recommendedName>
        <fullName>DNA-binding protein inhibitor ID-2</fullName>
    </recommendedName>
    <alternativeName>
        <fullName>Inhibitor of DNA binding 2</fullName>
    </alternativeName>
    <alternativeName>
        <fullName>Inhibitor of differentiation 2</fullName>
    </alternativeName>
</protein>
<accession>Q3ZC46</accession>
<dbReference type="EMBL" id="BC102921">
    <property type="protein sequence ID" value="AAI02922.1"/>
    <property type="molecule type" value="mRNA"/>
</dbReference>
<dbReference type="RefSeq" id="NP_001029403.1">
    <property type="nucleotide sequence ID" value="NM_001034231.2"/>
</dbReference>
<dbReference type="RefSeq" id="XP_005212992.1">
    <property type="nucleotide sequence ID" value="XM_005212935.3"/>
</dbReference>
<dbReference type="SMR" id="Q3ZC46"/>
<dbReference type="FunCoup" id="Q3ZC46">
    <property type="interactions" value="537"/>
</dbReference>
<dbReference type="STRING" id="9913.ENSBTAP00000028235"/>
<dbReference type="PaxDb" id="9913-ENSBTAP00000028235"/>
<dbReference type="Ensembl" id="ENSBTAT00000028235.4">
    <property type="protein sequence ID" value="ENSBTAP00000028235.2"/>
    <property type="gene ID" value="ENSBTAG00000021187.4"/>
</dbReference>
<dbReference type="GeneID" id="505025"/>
<dbReference type="KEGG" id="bta:505025"/>
<dbReference type="CTD" id="3398"/>
<dbReference type="VEuPathDB" id="HostDB:ENSBTAG00000021187"/>
<dbReference type="VGNC" id="VGNC:59229">
    <property type="gene designation" value="ID2"/>
</dbReference>
<dbReference type="eggNOG" id="ENOG502RZP5">
    <property type="taxonomic scope" value="Eukaryota"/>
</dbReference>
<dbReference type="GeneTree" id="ENSGT00940000156464"/>
<dbReference type="HOGENOM" id="CLU_116790_2_1_1"/>
<dbReference type="InParanoid" id="Q3ZC46"/>
<dbReference type="OMA" id="FPTELMT"/>
<dbReference type="TreeFam" id="TF326217"/>
<dbReference type="Proteomes" id="UP000009136">
    <property type="component" value="Chromosome 11"/>
</dbReference>
<dbReference type="Bgee" id="ENSBTAG00000021187">
    <property type="expression patterns" value="Expressed in mammary gland fat and 106 other cell types or tissues"/>
</dbReference>
<dbReference type="GO" id="GO:0005737">
    <property type="term" value="C:cytoplasm"/>
    <property type="evidence" value="ECO:0000250"/>
    <property type="project" value="UniProtKB"/>
</dbReference>
<dbReference type="GO" id="GO:0005829">
    <property type="term" value="C:cytosol"/>
    <property type="evidence" value="ECO:0007669"/>
    <property type="project" value="Ensembl"/>
</dbReference>
<dbReference type="GO" id="GO:0000791">
    <property type="term" value="C:euchromatin"/>
    <property type="evidence" value="ECO:0007669"/>
    <property type="project" value="Ensembl"/>
</dbReference>
<dbReference type="GO" id="GO:0005634">
    <property type="term" value="C:nucleus"/>
    <property type="evidence" value="ECO:0000318"/>
    <property type="project" value="GO_Central"/>
</dbReference>
<dbReference type="GO" id="GO:0032991">
    <property type="term" value="C:protein-containing complex"/>
    <property type="evidence" value="ECO:0000250"/>
    <property type="project" value="UniProtKB"/>
</dbReference>
<dbReference type="GO" id="GO:0046983">
    <property type="term" value="F:protein dimerization activity"/>
    <property type="evidence" value="ECO:0007669"/>
    <property type="project" value="InterPro"/>
</dbReference>
<dbReference type="GO" id="GO:0061629">
    <property type="term" value="F:RNA polymerase II-specific DNA-binding transcription factor binding"/>
    <property type="evidence" value="ECO:0007669"/>
    <property type="project" value="Ensembl"/>
</dbReference>
<dbReference type="GO" id="GO:0003714">
    <property type="term" value="F:transcription corepressor activity"/>
    <property type="evidence" value="ECO:0000318"/>
    <property type="project" value="GO_Central"/>
</dbReference>
<dbReference type="GO" id="GO:0140416">
    <property type="term" value="F:transcription regulator inhibitor activity"/>
    <property type="evidence" value="ECO:0007669"/>
    <property type="project" value="Ensembl"/>
</dbReference>
<dbReference type="GO" id="GO:0044325">
    <property type="term" value="F:transmembrane transporter binding"/>
    <property type="evidence" value="ECO:0007669"/>
    <property type="project" value="Ensembl"/>
</dbReference>
<dbReference type="GO" id="GO:0060612">
    <property type="term" value="P:adipose tissue development"/>
    <property type="evidence" value="ECO:0007669"/>
    <property type="project" value="Ensembl"/>
</dbReference>
<dbReference type="GO" id="GO:0008344">
    <property type="term" value="P:adult locomotory behavior"/>
    <property type="evidence" value="ECO:0007669"/>
    <property type="project" value="Ensembl"/>
</dbReference>
<dbReference type="GO" id="GO:0048708">
    <property type="term" value="P:astrocyte differentiation"/>
    <property type="evidence" value="ECO:0007669"/>
    <property type="project" value="Ensembl"/>
</dbReference>
<dbReference type="GO" id="GO:0030183">
    <property type="term" value="P:B cell differentiation"/>
    <property type="evidence" value="ECO:0007669"/>
    <property type="project" value="Ensembl"/>
</dbReference>
<dbReference type="GO" id="GO:0003166">
    <property type="term" value="P:bundle of His development"/>
    <property type="evidence" value="ECO:0007669"/>
    <property type="project" value="Ensembl"/>
</dbReference>
<dbReference type="GO" id="GO:0048469">
    <property type="term" value="P:cell maturation"/>
    <property type="evidence" value="ECO:0007669"/>
    <property type="project" value="Ensembl"/>
</dbReference>
<dbReference type="GO" id="GO:0048667">
    <property type="term" value="P:cell morphogenesis involved in neuron differentiation"/>
    <property type="evidence" value="ECO:0007669"/>
    <property type="project" value="Ensembl"/>
</dbReference>
<dbReference type="GO" id="GO:0071285">
    <property type="term" value="P:cellular response to lithium ion"/>
    <property type="evidence" value="ECO:0007669"/>
    <property type="project" value="Ensembl"/>
</dbReference>
<dbReference type="GO" id="GO:0090398">
    <property type="term" value="P:cellular senescence"/>
    <property type="evidence" value="ECO:0000250"/>
    <property type="project" value="UniProtKB"/>
</dbReference>
<dbReference type="GO" id="GO:0032922">
    <property type="term" value="P:circadian regulation of gene expression"/>
    <property type="evidence" value="ECO:0000250"/>
    <property type="project" value="UniProtKB"/>
</dbReference>
<dbReference type="GO" id="GO:0071542">
    <property type="term" value="P:dopaminergic neuron differentiation"/>
    <property type="evidence" value="ECO:0007669"/>
    <property type="project" value="Ensembl"/>
</dbReference>
<dbReference type="GO" id="GO:0048557">
    <property type="term" value="P:embryonic digestive tract morphogenesis"/>
    <property type="evidence" value="ECO:0000250"/>
    <property type="project" value="UniProtKB"/>
</dbReference>
<dbReference type="GO" id="GO:0061031">
    <property type="term" value="P:endodermal digestive tract morphogenesis"/>
    <property type="evidence" value="ECO:0000250"/>
    <property type="project" value="UniProtKB"/>
</dbReference>
<dbReference type="GO" id="GO:0043153">
    <property type="term" value="P:entrainment of circadian clock by photoperiod"/>
    <property type="evidence" value="ECO:0000250"/>
    <property type="project" value="UniProtKB"/>
</dbReference>
<dbReference type="GO" id="GO:0043353">
    <property type="term" value="P:enucleate erythrocyte differentiation"/>
    <property type="evidence" value="ECO:0007669"/>
    <property type="project" value="Ensembl"/>
</dbReference>
<dbReference type="GO" id="GO:0061030">
    <property type="term" value="P:epithelial cell differentiation involved in mammary gland alveolus development"/>
    <property type="evidence" value="ECO:0000250"/>
    <property type="project" value="UniProtKB"/>
</dbReference>
<dbReference type="GO" id="GO:0045475">
    <property type="term" value="P:locomotor rhythm"/>
    <property type="evidence" value="ECO:0000250"/>
    <property type="project" value="UniProtKB"/>
</dbReference>
<dbReference type="GO" id="GO:0060749">
    <property type="term" value="P:mammary gland alveolus development"/>
    <property type="evidence" value="ECO:0000250"/>
    <property type="project" value="UniProtKB"/>
</dbReference>
<dbReference type="GO" id="GO:0033598">
    <property type="term" value="P:mammary gland epithelial cell proliferation"/>
    <property type="evidence" value="ECO:0000250"/>
    <property type="project" value="UniProtKB"/>
</dbReference>
<dbReference type="GO" id="GO:0003149">
    <property type="term" value="P:membranous septum morphogenesis"/>
    <property type="evidence" value="ECO:0007669"/>
    <property type="project" value="Ensembl"/>
</dbReference>
<dbReference type="GO" id="GO:0001656">
    <property type="term" value="P:metanephros development"/>
    <property type="evidence" value="ECO:0007669"/>
    <property type="project" value="Ensembl"/>
</dbReference>
<dbReference type="GO" id="GO:0001779">
    <property type="term" value="P:natural killer cell differentiation"/>
    <property type="evidence" value="ECO:0007669"/>
    <property type="project" value="Ensembl"/>
</dbReference>
<dbReference type="GO" id="GO:0045578">
    <property type="term" value="P:negative regulation of B cell differentiation"/>
    <property type="evidence" value="ECO:0007669"/>
    <property type="project" value="Ensembl"/>
</dbReference>
<dbReference type="GO" id="GO:1904339">
    <property type="term" value="P:negative regulation of dopaminergic neuron differentiation"/>
    <property type="evidence" value="ECO:0007669"/>
    <property type="project" value="Ensembl"/>
</dbReference>
<dbReference type="GO" id="GO:0010629">
    <property type="term" value="P:negative regulation of gene expression"/>
    <property type="evidence" value="ECO:0000250"/>
    <property type="project" value="UniProtKB"/>
</dbReference>
<dbReference type="GO" id="GO:0051148">
    <property type="term" value="P:negative regulation of muscle cell differentiation"/>
    <property type="evidence" value="ECO:0007669"/>
    <property type="project" value="Ensembl"/>
</dbReference>
<dbReference type="GO" id="GO:0048715">
    <property type="term" value="P:negative regulation of oligodendrocyte differentiation"/>
    <property type="evidence" value="ECO:0007669"/>
    <property type="project" value="Ensembl"/>
</dbReference>
<dbReference type="GO" id="GO:0045668">
    <property type="term" value="P:negative regulation of osteoblast differentiation"/>
    <property type="evidence" value="ECO:0007669"/>
    <property type="project" value="Ensembl"/>
</dbReference>
<dbReference type="GO" id="GO:0000122">
    <property type="term" value="P:negative regulation of transcription by RNA polymerase II"/>
    <property type="evidence" value="ECO:0000318"/>
    <property type="project" value="GO_Central"/>
</dbReference>
<dbReference type="GO" id="GO:0030182">
    <property type="term" value="P:neuron differentiation"/>
    <property type="evidence" value="ECO:0000318"/>
    <property type="project" value="GO_Central"/>
</dbReference>
<dbReference type="GO" id="GO:0048663">
    <property type="term" value="P:neuron fate commitment"/>
    <property type="evidence" value="ECO:0000250"/>
    <property type="project" value="UniProtKB"/>
</dbReference>
<dbReference type="GO" id="GO:0021772">
    <property type="term" value="P:olfactory bulb development"/>
    <property type="evidence" value="ECO:0007669"/>
    <property type="project" value="Ensembl"/>
</dbReference>
<dbReference type="GO" id="GO:0014003">
    <property type="term" value="P:oligodendrocyte development"/>
    <property type="evidence" value="ECO:0007669"/>
    <property type="project" value="Ensembl"/>
</dbReference>
<dbReference type="GO" id="GO:0048541">
    <property type="term" value="P:Peyer's patch development"/>
    <property type="evidence" value="ECO:0007669"/>
    <property type="project" value="Ensembl"/>
</dbReference>
<dbReference type="GO" id="GO:0048711">
    <property type="term" value="P:positive regulation of astrocyte differentiation"/>
    <property type="evidence" value="ECO:0007669"/>
    <property type="project" value="Ensembl"/>
</dbReference>
<dbReference type="GO" id="GO:0045777">
    <property type="term" value="P:positive regulation of blood pressure"/>
    <property type="evidence" value="ECO:0000250"/>
    <property type="project" value="UniProtKB"/>
</dbReference>
<dbReference type="GO" id="GO:0045893">
    <property type="term" value="P:positive regulation of DNA-templated transcription"/>
    <property type="evidence" value="ECO:0000250"/>
    <property type="project" value="UniProtKB"/>
</dbReference>
<dbReference type="GO" id="GO:0045648">
    <property type="term" value="P:positive regulation of erythrocyte differentiation"/>
    <property type="evidence" value="ECO:0007669"/>
    <property type="project" value="Ensembl"/>
</dbReference>
<dbReference type="GO" id="GO:0045600">
    <property type="term" value="P:positive regulation of fat cell differentiation"/>
    <property type="evidence" value="ECO:0007669"/>
    <property type="project" value="Ensembl"/>
</dbReference>
<dbReference type="GO" id="GO:0010628">
    <property type="term" value="P:positive regulation of gene expression"/>
    <property type="evidence" value="ECO:0000250"/>
    <property type="project" value="UniProtKB"/>
</dbReference>
<dbReference type="GO" id="GO:0045651">
    <property type="term" value="P:positive regulation of macrophage differentiation"/>
    <property type="evidence" value="ECO:0007669"/>
    <property type="project" value="Ensembl"/>
</dbReference>
<dbReference type="GO" id="GO:0048661">
    <property type="term" value="P:positive regulation of smooth muscle cell proliferation"/>
    <property type="evidence" value="ECO:0000250"/>
    <property type="project" value="UniProtKB"/>
</dbReference>
<dbReference type="GO" id="GO:0042752">
    <property type="term" value="P:regulation of circadian rhythm"/>
    <property type="evidence" value="ECO:0000250"/>
    <property type="project" value="UniProtKB"/>
</dbReference>
<dbReference type="GO" id="GO:2000045">
    <property type="term" value="P:regulation of G1/S transition of mitotic cell cycle"/>
    <property type="evidence" value="ECO:0007669"/>
    <property type="project" value="Ensembl"/>
</dbReference>
<dbReference type="GO" id="GO:0010468">
    <property type="term" value="P:regulation of gene expression"/>
    <property type="evidence" value="ECO:0000250"/>
    <property type="project" value="UniProtKB"/>
</dbReference>
<dbReference type="GO" id="GO:0019216">
    <property type="term" value="P:regulation of lipid metabolic process"/>
    <property type="evidence" value="ECO:0000250"/>
    <property type="project" value="UniProtKB"/>
</dbReference>
<dbReference type="GO" id="GO:2000177">
    <property type="term" value="P:regulation of neural precursor cell proliferation"/>
    <property type="evidence" value="ECO:0000250"/>
    <property type="project" value="UniProtKB"/>
</dbReference>
<dbReference type="GO" id="GO:0045664">
    <property type="term" value="P:regulation of neuron differentiation"/>
    <property type="evidence" value="ECO:0000250"/>
    <property type="project" value="UniProtKB"/>
</dbReference>
<dbReference type="GO" id="GO:0001966">
    <property type="term" value="P:thigmotaxis"/>
    <property type="evidence" value="ECO:0007669"/>
    <property type="project" value="Ensembl"/>
</dbReference>
<dbReference type="GO" id="GO:0050872">
    <property type="term" value="P:white fat cell differentiation"/>
    <property type="evidence" value="ECO:0007669"/>
    <property type="project" value="Ensembl"/>
</dbReference>
<dbReference type="CDD" id="cd19692">
    <property type="entry name" value="bHLH_dnHLH_ID2"/>
    <property type="match status" value="1"/>
</dbReference>
<dbReference type="FunFam" id="4.10.280.10:FF:000055">
    <property type="entry name" value="DNA-binding protein inhibitor ID-2"/>
    <property type="match status" value="1"/>
</dbReference>
<dbReference type="Gene3D" id="4.10.280.10">
    <property type="entry name" value="Helix-loop-helix DNA-binding domain"/>
    <property type="match status" value="1"/>
</dbReference>
<dbReference type="InterPro" id="IPR011598">
    <property type="entry name" value="bHLH_dom"/>
</dbReference>
<dbReference type="InterPro" id="IPR026052">
    <property type="entry name" value="DNA-bd_prot-inh"/>
</dbReference>
<dbReference type="InterPro" id="IPR036638">
    <property type="entry name" value="HLH_DNA-bd_sf"/>
</dbReference>
<dbReference type="PANTHER" id="PTHR11723">
    <property type="entry name" value="DNA-BINDING PROTEIN INHIBITOR"/>
    <property type="match status" value="1"/>
</dbReference>
<dbReference type="PANTHER" id="PTHR11723:SF5">
    <property type="entry name" value="DNA-BINDING PROTEIN INHIBITOR ID-2"/>
    <property type="match status" value="1"/>
</dbReference>
<dbReference type="Pfam" id="PF00010">
    <property type="entry name" value="HLH"/>
    <property type="match status" value="1"/>
</dbReference>
<dbReference type="SMART" id="SM00353">
    <property type="entry name" value="HLH"/>
    <property type="match status" value="1"/>
</dbReference>
<dbReference type="SUPFAM" id="SSF47459">
    <property type="entry name" value="HLH, helix-loop-helix DNA-binding domain"/>
    <property type="match status" value="1"/>
</dbReference>
<dbReference type="PROSITE" id="PS50888">
    <property type="entry name" value="BHLH"/>
    <property type="match status" value="1"/>
</dbReference>
<evidence type="ECO:0000250" key="1"/>
<evidence type="ECO:0000250" key="2">
    <source>
        <dbReference type="UniProtKB" id="P41136"/>
    </source>
</evidence>
<evidence type="ECO:0000250" key="3">
    <source>
        <dbReference type="UniProtKB" id="P41137"/>
    </source>
</evidence>
<evidence type="ECO:0000250" key="4">
    <source>
        <dbReference type="UniProtKB" id="Q02363"/>
    </source>
</evidence>
<evidence type="ECO:0000255" key="5">
    <source>
        <dbReference type="PROSITE-ProRule" id="PRU00981"/>
    </source>
</evidence>
<evidence type="ECO:0000256" key="6">
    <source>
        <dbReference type="SAM" id="MobiDB-lite"/>
    </source>
</evidence>
<comment type="function">
    <text evidence="1">Transcriptional regulator (lacking a basic DNA binding domain) which negatively regulates the basic helix-loop-helix (bHLH) transcription factors by forming heterodimers and inhibiting their DNA binding and transcriptional activity. Implicated in regulating a variety of cellular processes, including cellular growth, senescence, differentiation, apoptosis, angiogenesis, and neoplastic transformation. Inhibits skeletal muscle and cardiac myocyte differentiation. Regulates the circadian clock by repressing the transcriptional activator activity of the CLOCK-BMAL1 heterodimer. Restricts the CLOCK and BMAL1 localization to the cytoplasm. Plays a role in both the input and output pathways of the circadian clock: in the input component, is involved in modulating the magnitude of photic entrainment and in the output component, contributes to the regulation of a variety of liver clock-controlled genes involved in lipid metabolism (By similarity).</text>
</comment>
<comment type="subunit">
    <text evidence="2 4">Interacts with GATA4 and NKX2-5 (By similarity). Interacts with NR0B2. Interacts with CLOCK and BMAL1 (By similarity). Interacts with IFI204 (By similarity). Interacts with NEDD9/HEF1. Interacts with ASB4; this interaction promotes ID2 proteasomal degradation (By similarity).</text>
</comment>
<comment type="subcellular location">
    <subcellularLocation>
        <location evidence="2">Cytoplasm</location>
    </subcellularLocation>
    <subcellularLocation>
        <location evidence="2">Nucleus</location>
    </subcellularLocation>
</comment>
<comment type="domain">
    <text evidence="1">The bHLH domain is essential for its repressor activity towards the CLOCK-BMAL1 heterodimer.</text>
</comment>
<comment type="PTM">
    <text evidence="4">Ubiquitinated in a ASB4-depedent manner, leading to proteasomal degradation.</text>
</comment>
<comment type="PTM">
    <text evidence="3">Phosphorylated in vitro by CDK1, PKA and PKC.</text>
</comment>
<reference key="1">
    <citation type="submission" date="2005-08" db="EMBL/GenBank/DDBJ databases">
        <authorList>
            <consortium name="NIH - Mammalian Gene Collection (MGC) project"/>
        </authorList>
    </citation>
    <scope>NUCLEOTIDE SEQUENCE [LARGE SCALE MRNA]</scope>
    <source>
        <strain>Hereford</strain>
        <tissue>Pancreas</tissue>
    </source>
</reference>
<feature type="chain" id="PRO_0000127239" description="DNA-binding protein inhibitor ID-2">
    <location>
        <begin position="1"/>
        <end position="134"/>
    </location>
</feature>
<feature type="domain" description="bHLH" evidence="5">
    <location>
        <begin position="23"/>
        <end position="75"/>
    </location>
</feature>
<feature type="region of interest" description="Disordered" evidence="6">
    <location>
        <begin position="1"/>
        <end position="24"/>
    </location>
</feature>
<feature type="short sequence motif" description="Nuclear export signal" evidence="1">
    <location>
        <begin position="106"/>
        <end position="115"/>
    </location>
</feature>
<feature type="modified residue" description="Phosphoserine" evidence="4">
    <location>
        <position position="14"/>
    </location>
</feature>
<feature type="modified residue" description="Phosphoserine" evidence="2">
    <location>
        <position position="25"/>
    </location>
</feature>
<name>ID2_BOVIN</name>